<organism>
    <name type="scientific">Caenorhabditis elegans</name>
    <dbReference type="NCBI Taxonomy" id="6239"/>
    <lineage>
        <taxon>Eukaryota</taxon>
        <taxon>Metazoa</taxon>
        <taxon>Ecdysozoa</taxon>
        <taxon>Nematoda</taxon>
        <taxon>Chromadorea</taxon>
        <taxon>Rhabditida</taxon>
        <taxon>Rhabditina</taxon>
        <taxon>Rhabditomorpha</taxon>
        <taxon>Rhabditoidea</taxon>
        <taxon>Rhabditidae</taxon>
        <taxon>Peloderinae</taxon>
        <taxon>Caenorhabditis</taxon>
    </lineage>
</organism>
<gene>
    <name type="primary">hsp-16.41</name>
    <name type="synonym">hsp16-41</name>
    <name type="ORF">Y46H3A.2</name>
</gene>
<proteinExistence type="evidence at transcript level"/>
<comment type="similarity">
    <text evidence="1">Belongs to the small heat shock protein (HSP20) family.</text>
</comment>
<name>HSP16_CAEEL</name>
<accession>P06581</accession>
<accession>P02514</accession>
<protein>
    <recommendedName>
        <fullName>Heat shock protein Hsp-16.41</fullName>
    </recommendedName>
</protein>
<keyword id="KW-1185">Reference proteome</keyword>
<keyword id="KW-0346">Stress response</keyword>
<evidence type="ECO:0000255" key="1">
    <source>
        <dbReference type="PROSITE-ProRule" id="PRU00285"/>
    </source>
</evidence>
<dbReference type="EMBL" id="M14334">
    <property type="protein sequence ID" value="AAA28070.1"/>
    <property type="status" value="ALT_SEQ"/>
    <property type="molecule type" value="Genomic_DNA"/>
</dbReference>
<dbReference type="EMBL" id="FO081307">
    <property type="protein sequence ID" value="CCD70650.1"/>
    <property type="molecule type" value="Genomic_DNA"/>
</dbReference>
<dbReference type="EMBL" id="X01577">
    <property type="protein sequence ID" value="CAA25732.1"/>
    <property type="molecule type" value="mRNA"/>
</dbReference>
<dbReference type="PIR" id="A25199">
    <property type="entry name" value="HHKW41"/>
</dbReference>
<dbReference type="RefSeq" id="NP_872116.2">
    <property type="nucleotide sequence ID" value="NM_182316.5"/>
</dbReference>
<dbReference type="SMR" id="P06581"/>
<dbReference type="BioGRID" id="43725">
    <property type="interactions" value="3"/>
</dbReference>
<dbReference type="FunCoup" id="P06581">
    <property type="interactions" value="5"/>
</dbReference>
<dbReference type="IntAct" id="P06581">
    <property type="interactions" value="2"/>
</dbReference>
<dbReference type="STRING" id="6239.Y46H3A.2.1"/>
<dbReference type="PaxDb" id="6239-Y46H3A.2"/>
<dbReference type="PeptideAtlas" id="P06581"/>
<dbReference type="EnsemblMetazoa" id="Y46H3A.2.1">
    <property type="protein sequence ID" value="Y46H3A.2.1"/>
    <property type="gene ID" value="WBGene00002018"/>
</dbReference>
<dbReference type="GeneID" id="178660"/>
<dbReference type="KEGG" id="cel:CELE_Y46H3A.2"/>
<dbReference type="UCSC" id="Y46H3A.2">
    <property type="organism name" value="c. elegans"/>
</dbReference>
<dbReference type="AGR" id="WB:WBGene00002018"/>
<dbReference type="CTD" id="178660"/>
<dbReference type="WormBase" id="Y46H3A.2">
    <property type="protein sequence ID" value="CE22003"/>
    <property type="gene ID" value="WBGene00002018"/>
    <property type="gene designation" value="hsp-16.41"/>
</dbReference>
<dbReference type="eggNOG" id="KOG3591">
    <property type="taxonomic scope" value="Eukaryota"/>
</dbReference>
<dbReference type="GeneTree" id="ENSGT00970000196196"/>
<dbReference type="HOGENOM" id="CLU_095001_4_1_1"/>
<dbReference type="InParanoid" id="P06581"/>
<dbReference type="OMA" id="HIEGHPK"/>
<dbReference type="OrthoDB" id="1431247at2759"/>
<dbReference type="PhylomeDB" id="P06581"/>
<dbReference type="Reactome" id="R-CEL-4420097">
    <property type="pathway name" value="VEGFA-VEGFR2 Pathway"/>
</dbReference>
<dbReference type="PRO" id="PR:P06581"/>
<dbReference type="Proteomes" id="UP000001940">
    <property type="component" value="Chromosome V"/>
</dbReference>
<dbReference type="Bgee" id="WBGene00002018">
    <property type="expression patterns" value="Expressed in pharyngeal muscle cell (C elegans) and 4 other cell types or tissues"/>
</dbReference>
<dbReference type="GO" id="GO:0005737">
    <property type="term" value="C:cytoplasm"/>
    <property type="evidence" value="ECO:0000318"/>
    <property type="project" value="GO_Central"/>
</dbReference>
<dbReference type="GO" id="GO:0005634">
    <property type="term" value="C:nucleus"/>
    <property type="evidence" value="ECO:0000318"/>
    <property type="project" value="GO_Central"/>
</dbReference>
<dbReference type="GO" id="GO:0051082">
    <property type="term" value="F:unfolded protein binding"/>
    <property type="evidence" value="ECO:0000250"/>
    <property type="project" value="WormBase"/>
</dbReference>
<dbReference type="GO" id="GO:0050829">
    <property type="term" value="P:defense response to Gram-negative bacterium"/>
    <property type="evidence" value="ECO:0000270"/>
    <property type="project" value="WormBase"/>
</dbReference>
<dbReference type="GO" id="GO:0030968">
    <property type="term" value="P:endoplasmic reticulum unfolded protein response"/>
    <property type="evidence" value="ECO:0007007"/>
    <property type="project" value="WormBase"/>
</dbReference>
<dbReference type="GO" id="GO:0036498">
    <property type="term" value="P:IRE1-mediated unfolded protein response"/>
    <property type="evidence" value="ECO:0007007"/>
    <property type="project" value="WormBase"/>
</dbReference>
<dbReference type="GO" id="GO:0042026">
    <property type="term" value="P:protein refolding"/>
    <property type="evidence" value="ECO:0000318"/>
    <property type="project" value="GO_Central"/>
</dbReference>
<dbReference type="GO" id="GO:0009408">
    <property type="term" value="P:response to heat"/>
    <property type="evidence" value="ECO:0000270"/>
    <property type="project" value="WormBase"/>
</dbReference>
<dbReference type="CDD" id="cd06526">
    <property type="entry name" value="metazoan_ACD"/>
    <property type="match status" value="1"/>
</dbReference>
<dbReference type="Gene3D" id="2.60.40.790">
    <property type="match status" value="1"/>
</dbReference>
<dbReference type="InterPro" id="IPR002068">
    <property type="entry name" value="A-crystallin/Hsp20_dom"/>
</dbReference>
<dbReference type="InterPro" id="IPR001436">
    <property type="entry name" value="Alpha-crystallin/sHSP_animal"/>
</dbReference>
<dbReference type="InterPro" id="IPR008978">
    <property type="entry name" value="HSP20-like_chaperone"/>
</dbReference>
<dbReference type="PANTHER" id="PTHR45640">
    <property type="entry name" value="HEAT SHOCK PROTEIN HSP-12.2-RELATED"/>
    <property type="match status" value="1"/>
</dbReference>
<dbReference type="PANTHER" id="PTHR45640:SF21">
    <property type="entry name" value="HEAT SHOCK PROTEIN HSP-16.41-RELATED"/>
    <property type="match status" value="1"/>
</dbReference>
<dbReference type="Pfam" id="PF00011">
    <property type="entry name" value="HSP20"/>
    <property type="match status" value="1"/>
</dbReference>
<dbReference type="PRINTS" id="PR00299">
    <property type="entry name" value="ACRYSTALLIN"/>
</dbReference>
<dbReference type="SUPFAM" id="SSF49764">
    <property type="entry name" value="HSP20-like chaperones"/>
    <property type="match status" value="1"/>
</dbReference>
<dbReference type="PROSITE" id="PS01031">
    <property type="entry name" value="SHSP"/>
    <property type="match status" value="1"/>
</dbReference>
<reference key="1">
    <citation type="journal article" date="1986" name="J. Biol. Chem.">
        <title>Structure, expression, and evolution of a heat shock gene locus in Caenorhabditis elegans that is flanked by repetitive elements.</title>
        <authorList>
            <person name="Jones D."/>
            <person name="Russnak R.H."/>
            <person name="Kay R.J."/>
            <person name="Candido E.P.M."/>
        </authorList>
    </citation>
    <scope>NUCLEOTIDE SEQUENCE [GENOMIC DNA]</scope>
</reference>
<reference key="2">
    <citation type="journal article" date="1998" name="Science">
        <title>Genome sequence of the nematode C. elegans: a platform for investigating biology.</title>
        <authorList>
            <consortium name="The C. elegans sequencing consortium"/>
        </authorList>
    </citation>
    <scope>NUCLEOTIDE SEQUENCE [LARGE SCALE GENOMIC DNA]</scope>
    <source>
        <strain>Bristol N2</strain>
    </source>
</reference>
<reference key="3">
    <citation type="journal article" date="1983" name="Nucleic Acids Res.">
        <title>Cloning and analysis of cDNA sequences coding for two 16 kilodalton heat shock proteins (hsps) in Caenorhabditis elegans: homology with the small hsps of Drosophila.</title>
        <authorList>
            <person name="Russnak R.H."/>
            <person name="Jones D."/>
            <person name="Candido E.P.M."/>
        </authorList>
    </citation>
    <scope>NUCLEOTIDE SEQUENCE [MRNA] OF 47-143</scope>
</reference>
<feature type="chain" id="PRO_0000125960" description="Heat shock protein Hsp-16.41">
    <location>
        <begin position="1"/>
        <end position="143"/>
    </location>
</feature>
<feature type="domain" description="sHSP" evidence="1">
    <location>
        <begin position="35"/>
        <end position="140"/>
    </location>
</feature>
<sequence>MLMLRSPYSDSNALDHFLDELTGSVQFPYWRNADHNSFNFSDNIGEIVNDESKFSVQLDVSHFKPENLKIKLDGRELKIEGIQETKSEHGYLKRSFSKMILLPEDADLPSVKSAISNEGKLQIEAPKKTNSSRSIPINFVAKH</sequence>